<protein>
    <recommendedName>
        <fullName>General odorant-binding protein 71</fullName>
    </recommendedName>
</protein>
<gene>
    <name type="primary">Obp71</name>
    <name type="ORF">AGAP012867</name>
</gene>
<sequence>MCGAIVLLLLVGTSPAPVEGLRCRTGEGPSADDVKRIVRTCMNKITNAGTMGEWGQRDRNGEEQQMMRDYGRSHRRRKRQYYGGQTSGSSSSGSAGEHSYNGRASPQYGEAGQGGNGTRSGGNSSSSSSSTIERDRACLMQCFFEEMKATNADGFPEKHKVLHVITKDIREHELREFYVDSIQECFHMLGLDNRLKDKCDYSMRFVTCLSDRFETNCDDWESVTSAMF</sequence>
<proteinExistence type="inferred from homology"/>
<organism>
    <name type="scientific">Anopheles gambiae</name>
    <name type="common">African malaria mosquito</name>
    <dbReference type="NCBI Taxonomy" id="7165"/>
    <lineage>
        <taxon>Eukaryota</taxon>
        <taxon>Metazoa</taxon>
        <taxon>Ecdysozoa</taxon>
        <taxon>Arthropoda</taxon>
        <taxon>Hexapoda</taxon>
        <taxon>Insecta</taxon>
        <taxon>Pterygota</taxon>
        <taxon>Neoptera</taxon>
        <taxon>Endopterygota</taxon>
        <taxon>Diptera</taxon>
        <taxon>Nematocera</taxon>
        <taxon>Culicoidea</taxon>
        <taxon>Culicidae</taxon>
        <taxon>Anophelinae</taxon>
        <taxon>Anopheles</taxon>
    </lineage>
</organism>
<keyword id="KW-1015">Disulfide bond</keyword>
<keyword id="KW-0552">Olfaction</keyword>
<keyword id="KW-1185">Reference proteome</keyword>
<keyword id="KW-0964">Secreted</keyword>
<keyword id="KW-0716">Sensory transduction</keyword>
<keyword id="KW-0732">Signal</keyword>
<keyword id="KW-0813">Transport</keyword>
<reference key="1">
    <citation type="journal article" date="2002" name="Science">
        <title>The genome sequence of the malaria mosquito Anopheles gambiae.</title>
        <authorList>
            <person name="Holt R.A."/>
            <person name="Subramanian G.M."/>
            <person name="Halpern A."/>
            <person name="Sutton G.G."/>
            <person name="Charlab R."/>
            <person name="Nusskern D.R."/>
            <person name="Wincker P."/>
            <person name="Clark A.G."/>
            <person name="Ribeiro J.M.C."/>
            <person name="Wides R."/>
            <person name="Salzberg S.L."/>
            <person name="Loftus B.J."/>
            <person name="Yandell M.D."/>
            <person name="Majoros W.H."/>
            <person name="Rusch D.B."/>
            <person name="Lai Z."/>
            <person name="Kraft C.L."/>
            <person name="Abril J.F."/>
            <person name="Anthouard V."/>
            <person name="Arensburger P."/>
            <person name="Atkinson P.W."/>
            <person name="Baden H."/>
            <person name="de Berardinis V."/>
            <person name="Baldwin D."/>
            <person name="Benes V."/>
            <person name="Biedler J."/>
            <person name="Blass C."/>
            <person name="Bolanos R."/>
            <person name="Boscus D."/>
            <person name="Barnstead M."/>
            <person name="Cai S."/>
            <person name="Center A."/>
            <person name="Chaturverdi K."/>
            <person name="Christophides G.K."/>
            <person name="Chrystal M.A.M."/>
            <person name="Clamp M."/>
            <person name="Cravchik A."/>
            <person name="Curwen V."/>
            <person name="Dana A."/>
            <person name="Delcher A."/>
            <person name="Dew I."/>
            <person name="Evans C.A."/>
            <person name="Flanigan M."/>
            <person name="Grundschober-Freimoser A."/>
            <person name="Friedli L."/>
            <person name="Gu Z."/>
            <person name="Guan P."/>
            <person name="Guigo R."/>
            <person name="Hillenmeyer M.E."/>
            <person name="Hladun S.L."/>
            <person name="Hogan J.R."/>
            <person name="Hong Y.S."/>
            <person name="Hoover J."/>
            <person name="Jaillon O."/>
            <person name="Ke Z."/>
            <person name="Kodira C.D."/>
            <person name="Kokoza E."/>
            <person name="Koutsos A."/>
            <person name="Letunic I."/>
            <person name="Levitsky A.A."/>
            <person name="Liang Y."/>
            <person name="Lin J.-J."/>
            <person name="Lobo N.F."/>
            <person name="Lopez J.R."/>
            <person name="Malek J.A."/>
            <person name="McIntosh T.C."/>
            <person name="Meister S."/>
            <person name="Miller J.R."/>
            <person name="Mobarry C."/>
            <person name="Mongin E."/>
            <person name="Murphy S.D."/>
            <person name="O'Brochta D.A."/>
            <person name="Pfannkoch C."/>
            <person name="Qi R."/>
            <person name="Regier M.A."/>
            <person name="Remington K."/>
            <person name="Shao H."/>
            <person name="Sharakhova M.V."/>
            <person name="Sitter C.D."/>
            <person name="Shetty J."/>
            <person name="Smith T.J."/>
            <person name="Strong R."/>
            <person name="Sun J."/>
            <person name="Thomasova D."/>
            <person name="Ton L.Q."/>
            <person name="Topalis P."/>
            <person name="Tu Z.J."/>
            <person name="Unger M.F."/>
            <person name="Walenz B."/>
            <person name="Wang A.H."/>
            <person name="Wang J."/>
            <person name="Wang M."/>
            <person name="Wang X."/>
            <person name="Woodford K.J."/>
            <person name="Wortman J.R."/>
            <person name="Wu M."/>
            <person name="Yao A."/>
            <person name="Zdobnov E.M."/>
            <person name="Zhang H."/>
            <person name="Zhao Q."/>
            <person name="Zhao S."/>
            <person name="Zhu S.C."/>
            <person name="Zhimulev I."/>
            <person name="Coluzzi M."/>
            <person name="della Torre A."/>
            <person name="Roth C.W."/>
            <person name="Louis C."/>
            <person name="Kalush F."/>
            <person name="Mural R.J."/>
            <person name="Myers E.W."/>
            <person name="Adams M.D."/>
            <person name="Smith H.O."/>
            <person name="Broder S."/>
            <person name="Gardner M.J."/>
            <person name="Fraser C.M."/>
            <person name="Birney E."/>
            <person name="Bork P."/>
            <person name="Brey P.T."/>
            <person name="Venter J.C."/>
            <person name="Weissenbach J."/>
            <person name="Kafatos F.C."/>
            <person name="Collins F.H."/>
            <person name="Hoffman S.L."/>
        </authorList>
    </citation>
    <scope>NUCLEOTIDE SEQUENCE [LARGE SCALE GENOMIC DNA]</scope>
    <source>
        <strain>PEST</strain>
    </source>
</reference>
<reference key="2">
    <citation type="journal article" date="2013" name="Genome Biol. Evol.">
        <title>Comparative genomics of odorant binding proteins in Anopheles gambiae, Aedes aegypti, and Culex quinquefasciatus.</title>
        <authorList>
            <person name="Manoharan M."/>
            <person name="Ng Fuk Chong M."/>
            <person name="Vaitinadapoule A."/>
            <person name="Frumence E."/>
            <person name="Sowdhamini R."/>
            <person name="Offmann B."/>
        </authorList>
    </citation>
    <scope>IDENTIFICATION</scope>
</reference>
<accession>Q5TYJ0</accession>
<feature type="signal peptide" evidence="2">
    <location>
        <begin position="1"/>
        <end position="20"/>
    </location>
</feature>
<feature type="chain" id="PRO_0000430411" description="General odorant-binding protein 71">
    <location>
        <begin position="21"/>
        <end position="228"/>
    </location>
</feature>
<feature type="region of interest" description="Disordered" evidence="3">
    <location>
        <begin position="50"/>
        <end position="131"/>
    </location>
</feature>
<feature type="compositionally biased region" description="Basic and acidic residues" evidence="3">
    <location>
        <begin position="55"/>
        <end position="72"/>
    </location>
</feature>
<feature type="compositionally biased region" description="Low complexity" evidence="3">
    <location>
        <begin position="83"/>
        <end position="99"/>
    </location>
</feature>
<feature type="compositionally biased region" description="Gly residues" evidence="3">
    <location>
        <begin position="111"/>
        <end position="120"/>
    </location>
</feature>
<feature type="compositionally biased region" description="Low complexity" evidence="3">
    <location>
        <begin position="121"/>
        <end position="131"/>
    </location>
</feature>
<feature type="disulfide bond" evidence="1">
    <location>
        <begin position="138"/>
        <end position="199"/>
    </location>
</feature>
<feature type="disulfide bond" evidence="1">
    <location>
        <begin position="185"/>
        <end position="208"/>
    </location>
</feature>
<dbReference type="EMBL" id="AAAB01000326">
    <property type="protein sequence ID" value="EAL42442.3"/>
    <property type="status" value="ALT_SEQ"/>
    <property type="molecule type" value="Genomic_DNA"/>
</dbReference>
<dbReference type="RefSeq" id="XP_561559.5">
    <property type="nucleotide sequence ID" value="XM_561559.5"/>
</dbReference>
<dbReference type="SMR" id="Q5TYJ0"/>
<dbReference type="FunCoup" id="Q5TYJ0">
    <property type="interactions" value="55"/>
</dbReference>
<dbReference type="STRING" id="7165.Q5TYJ0"/>
<dbReference type="PaxDb" id="7165-AGAP012867-PA"/>
<dbReference type="VEuPathDB" id="VectorBase:AGAMI1_009627"/>
<dbReference type="VEuPathDB" id="VectorBase:AGAP012867"/>
<dbReference type="eggNOG" id="ENOG502SBM2">
    <property type="taxonomic scope" value="Eukaryota"/>
</dbReference>
<dbReference type="HOGENOM" id="CLU_119225_0_0_1"/>
<dbReference type="InParanoid" id="Q5TYJ0"/>
<dbReference type="Proteomes" id="UP000007062">
    <property type="component" value="Unassembled WGS sequence"/>
</dbReference>
<dbReference type="GO" id="GO:0005576">
    <property type="term" value="C:extracellular region"/>
    <property type="evidence" value="ECO:0007669"/>
    <property type="project" value="UniProtKB-SubCell"/>
</dbReference>
<dbReference type="GO" id="GO:0005549">
    <property type="term" value="F:odorant binding"/>
    <property type="evidence" value="ECO:0007669"/>
    <property type="project" value="InterPro"/>
</dbReference>
<dbReference type="GO" id="GO:0007608">
    <property type="term" value="P:sensory perception of smell"/>
    <property type="evidence" value="ECO:0007669"/>
    <property type="project" value="UniProtKB-KW"/>
</dbReference>
<dbReference type="CDD" id="cd23992">
    <property type="entry name" value="PBP_GOBP"/>
    <property type="match status" value="1"/>
</dbReference>
<dbReference type="Gene3D" id="1.10.238.20">
    <property type="entry name" value="Pheromone/general odorant binding protein domain"/>
    <property type="match status" value="1"/>
</dbReference>
<dbReference type="InterPro" id="IPR052295">
    <property type="entry name" value="Odorant-binding_protein"/>
</dbReference>
<dbReference type="InterPro" id="IPR006170">
    <property type="entry name" value="PBP/GOBP"/>
</dbReference>
<dbReference type="InterPro" id="IPR036728">
    <property type="entry name" value="PBP_GOBP_sf"/>
</dbReference>
<dbReference type="PANTHER" id="PTHR21066:SF9">
    <property type="entry name" value="ODORANT-BINDING PROTEIN 59A"/>
    <property type="match status" value="1"/>
</dbReference>
<dbReference type="PANTHER" id="PTHR21066">
    <property type="entry name" value="ODORANT-BINDING PROTEIN 59A-RELATED"/>
    <property type="match status" value="1"/>
</dbReference>
<dbReference type="Pfam" id="PF01395">
    <property type="entry name" value="PBP_GOBP"/>
    <property type="match status" value="1"/>
</dbReference>
<dbReference type="SUPFAM" id="SSF47565">
    <property type="entry name" value="Insect pheromone/odorant-binding proteins"/>
    <property type="match status" value="1"/>
</dbReference>
<name>OBP71_ANOGA</name>
<evidence type="ECO:0000250" key="1"/>
<evidence type="ECO:0000255" key="2"/>
<evidence type="ECO:0000256" key="3">
    <source>
        <dbReference type="SAM" id="MobiDB-lite"/>
    </source>
</evidence>
<evidence type="ECO:0000305" key="4"/>
<comment type="function">
    <text evidence="1">Present in the aqueous fluid surrounding olfactory sensory dendrites and are thought to aid in the capture and transport of hydrophobic odorants into and through this fluid.</text>
</comment>
<comment type="subcellular location">
    <subcellularLocation>
        <location evidence="1">Secreted</location>
    </subcellularLocation>
</comment>
<comment type="similarity">
    <text evidence="4">Belongs to the PBP/GOBP family.</text>
</comment>
<comment type="sequence caution" evidence="4">
    <conflict type="erroneous gene model prediction">
        <sequence resource="EMBL-CDS" id="EAL42442"/>
    </conflict>
</comment>